<dbReference type="EMBL" id="CM002238">
    <property type="protein sequence ID" value="EAA33859.1"/>
    <property type="molecule type" value="Genomic_DNA"/>
</dbReference>
<dbReference type="RefSeq" id="XP_963095.1">
    <property type="nucleotide sequence ID" value="XM_958002.2"/>
</dbReference>
<dbReference type="SMR" id="Q7SBR3"/>
<dbReference type="FunCoup" id="Q7SBR3">
    <property type="interactions" value="416"/>
</dbReference>
<dbReference type="STRING" id="367110.Q7SBR3"/>
<dbReference type="PaxDb" id="5141-EFNCRP00000005940"/>
<dbReference type="EnsemblFungi" id="EAA33859">
    <property type="protein sequence ID" value="EAA33859"/>
    <property type="gene ID" value="NCU06244"/>
</dbReference>
<dbReference type="GeneID" id="3879250"/>
<dbReference type="KEGG" id="ncr:NCU06244"/>
<dbReference type="VEuPathDB" id="FungiDB:NCU06244"/>
<dbReference type="HOGENOM" id="CLU_141397_0_2_1"/>
<dbReference type="InParanoid" id="Q7SBR3"/>
<dbReference type="OMA" id="MAAWNQV"/>
<dbReference type="OrthoDB" id="7813104at2759"/>
<dbReference type="Proteomes" id="UP000001805">
    <property type="component" value="Chromosome 3, Linkage Group III"/>
</dbReference>
<dbReference type="GO" id="GO:0005743">
    <property type="term" value="C:mitochondrial inner membrane"/>
    <property type="evidence" value="ECO:0007669"/>
    <property type="project" value="UniProtKB-SubCell"/>
</dbReference>
<dbReference type="GO" id="GO:0042719">
    <property type="term" value="C:mitochondrial intermembrane space protein transporter complex"/>
    <property type="evidence" value="ECO:0000318"/>
    <property type="project" value="GO_Central"/>
</dbReference>
<dbReference type="GO" id="GO:0046872">
    <property type="term" value="F:metal ion binding"/>
    <property type="evidence" value="ECO:0007669"/>
    <property type="project" value="UniProtKB-KW"/>
</dbReference>
<dbReference type="GO" id="GO:0140318">
    <property type="term" value="F:protein transporter activity"/>
    <property type="evidence" value="ECO:0007669"/>
    <property type="project" value="EnsemblFungi"/>
</dbReference>
<dbReference type="GO" id="GO:0045039">
    <property type="term" value="P:protein insertion into mitochondrial inner membrane"/>
    <property type="evidence" value="ECO:0000318"/>
    <property type="project" value="GO_Central"/>
</dbReference>
<dbReference type="FunFam" id="1.10.287.810:FF:000001">
    <property type="entry name" value="mitochondrial import inner membrane translocase subunit TIM13"/>
    <property type="match status" value="1"/>
</dbReference>
<dbReference type="Gene3D" id="1.10.287.810">
    <property type="entry name" value="Mitochondrial import inner membrane translocase subunit tim13 like domains"/>
    <property type="match status" value="1"/>
</dbReference>
<dbReference type="InterPro" id="IPR004217">
    <property type="entry name" value="Tim10-like"/>
</dbReference>
<dbReference type="InterPro" id="IPR035427">
    <property type="entry name" value="Tim10-like_dom_sf"/>
</dbReference>
<dbReference type="Pfam" id="PF02953">
    <property type="entry name" value="zf-Tim10_DDP"/>
    <property type="match status" value="1"/>
</dbReference>
<dbReference type="SUPFAM" id="SSF144122">
    <property type="entry name" value="Tim10-like"/>
    <property type="match status" value="1"/>
</dbReference>
<organism>
    <name type="scientific">Neurospora crassa (strain ATCC 24698 / 74-OR23-1A / CBS 708.71 / DSM 1257 / FGSC 987)</name>
    <dbReference type="NCBI Taxonomy" id="367110"/>
    <lineage>
        <taxon>Eukaryota</taxon>
        <taxon>Fungi</taxon>
        <taxon>Dikarya</taxon>
        <taxon>Ascomycota</taxon>
        <taxon>Pezizomycotina</taxon>
        <taxon>Sordariomycetes</taxon>
        <taxon>Sordariomycetidae</taxon>
        <taxon>Sordariales</taxon>
        <taxon>Sordariaceae</taxon>
        <taxon>Neurospora</taxon>
    </lineage>
</organism>
<name>TIM13_NEUCR</name>
<accession>Q7SBR3</accession>
<sequence>MSDSTSETVKKAIIKQVLIESQSANARTLMEKIGENCFTSCVPKPGSSLSNSEKTCVTQCTEKYMAAWNVVNTTYLRRIQQEMGNQ</sequence>
<proteinExistence type="evidence at protein level"/>
<feature type="chain" id="PRO_0000228078" description="Mitochondrial import inner membrane translocase subunit tim13">
    <location>
        <begin position="1"/>
        <end position="86"/>
    </location>
</feature>
<feature type="short sequence motif" description="Twin CX3C motif">
    <location>
        <begin position="37"/>
        <end position="60"/>
    </location>
</feature>
<feature type="disulfide bond" evidence="1">
    <location>
        <begin position="37"/>
        <end position="60"/>
    </location>
</feature>
<feature type="disulfide bond" evidence="1">
    <location>
        <begin position="41"/>
        <end position="56"/>
    </location>
</feature>
<protein>
    <recommendedName>
        <fullName>Mitochondrial import inner membrane translocase subunit tim13</fullName>
    </recommendedName>
</protein>
<keyword id="KW-0143">Chaperone</keyword>
<keyword id="KW-1015">Disulfide bond</keyword>
<keyword id="KW-0472">Membrane</keyword>
<keyword id="KW-0479">Metal-binding</keyword>
<keyword id="KW-0496">Mitochondrion</keyword>
<keyword id="KW-0999">Mitochondrion inner membrane</keyword>
<keyword id="KW-0653">Protein transport</keyword>
<keyword id="KW-1185">Reference proteome</keyword>
<keyword id="KW-0811">Translocation</keyword>
<keyword id="KW-0813">Transport</keyword>
<keyword id="KW-0862">Zinc</keyword>
<reference key="1">
    <citation type="journal article" date="2003" name="Nature">
        <title>The genome sequence of the filamentous fungus Neurospora crassa.</title>
        <authorList>
            <person name="Galagan J.E."/>
            <person name="Calvo S.E."/>
            <person name="Borkovich K.A."/>
            <person name="Selker E.U."/>
            <person name="Read N.D."/>
            <person name="Jaffe D.B."/>
            <person name="FitzHugh W."/>
            <person name="Ma L.-J."/>
            <person name="Smirnov S."/>
            <person name="Purcell S."/>
            <person name="Rehman B."/>
            <person name="Elkins T."/>
            <person name="Engels R."/>
            <person name="Wang S."/>
            <person name="Nielsen C.B."/>
            <person name="Butler J."/>
            <person name="Endrizzi M."/>
            <person name="Qui D."/>
            <person name="Ianakiev P."/>
            <person name="Bell-Pedersen D."/>
            <person name="Nelson M.A."/>
            <person name="Werner-Washburne M."/>
            <person name="Selitrennikoff C.P."/>
            <person name="Kinsey J.A."/>
            <person name="Braun E.L."/>
            <person name="Zelter A."/>
            <person name="Schulte U."/>
            <person name="Kothe G.O."/>
            <person name="Jedd G."/>
            <person name="Mewes H.-W."/>
            <person name="Staben C."/>
            <person name="Marcotte E."/>
            <person name="Greenberg D."/>
            <person name="Roy A."/>
            <person name="Foley K."/>
            <person name="Naylor J."/>
            <person name="Stange-Thomann N."/>
            <person name="Barrett R."/>
            <person name="Gnerre S."/>
            <person name="Kamal M."/>
            <person name="Kamvysselis M."/>
            <person name="Mauceli E.W."/>
            <person name="Bielke C."/>
            <person name="Rudd S."/>
            <person name="Frishman D."/>
            <person name="Krystofova S."/>
            <person name="Rasmussen C."/>
            <person name="Metzenberg R.L."/>
            <person name="Perkins D.D."/>
            <person name="Kroken S."/>
            <person name="Cogoni C."/>
            <person name="Macino G."/>
            <person name="Catcheside D.E.A."/>
            <person name="Li W."/>
            <person name="Pratt R.J."/>
            <person name="Osmani S.A."/>
            <person name="DeSouza C.P.C."/>
            <person name="Glass N.L."/>
            <person name="Orbach M.J."/>
            <person name="Berglund J.A."/>
            <person name="Voelker R."/>
            <person name="Yarden O."/>
            <person name="Plamann M."/>
            <person name="Seiler S."/>
            <person name="Dunlap J.C."/>
            <person name="Radford A."/>
            <person name="Aramayo R."/>
            <person name="Natvig D.O."/>
            <person name="Alex L.A."/>
            <person name="Mannhaupt G."/>
            <person name="Ebbole D.J."/>
            <person name="Freitag M."/>
            <person name="Paulsen I."/>
            <person name="Sachs M.S."/>
            <person name="Lander E.S."/>
            <person name="Nusbaum C."/>
            <person name="Birren B.W."/>
        </authorList>
    </citation>
    <scope>NUCLEOTIDE SEQUENCE [LARGE SCALE GENOMIC DNA]</scope>
    <source>
        <strain>ATCC 24698 / 74-OR23-1A / CBS 708.71 / DSM 1257 / FGSC 987</strain>
    </source>
</reference>
<reference key="2">
    <citation type="journal article" date="2004" name="J. Biol. Chem.">
        <title>The Tim8-Tim13 complex of Neurospora crassa functions in the assembly of proteins into both mitochondrial membranes.</title>
        <authorList>
            <person name="Hoppins S.C."/>
            <person name="Nargang F.E."/>
        </authorList>
    </citation>
    <scope>FUNCTION IN TRANSFER OF BETA-BARREL PROTEINS</scope>
    <scope>SUBCELLULAR LOCATION</scope>
    <scope>SUBUNIT</scope>
</reference>
<gene>
    <name type="primary">tim13</name>
    <name type="ORF">NCU06244</name>
</gene>
<evidence type="ECO:0000250" key="1"/>
<evidence type="ECO:0000269" key="2">
    <source>
    </source>
</evidence>
<evidence type="ECO:0000305" key="3"/>
<comment type="function">
    <text evidence="2">Mitochondrial intermembrane chaperone that participates in the import and insertion of some multi-pass transmembrane proteins into the mitochondrial inner membrane. Also required for the transfer of beta-barrel precursors from the TOM complex to the sorting and assembly machinery (SAM complex) of the outer membrane. Acts as a chaperone-like protein that protects the hydrophobic precursors from aggregation and guide them through the mitochondrial intermembrane space. The tim8-tim13 complex is non essential and only mediates the import of few proteins, while the predominant tim9-tim10 70 kDa complex is crucial and mediates the import of much more proteins.</text>
</comment>
<comment type="subunit">
    <text evidence="2">Heterohexamer; composed of 3 copies of tim8 and 3 copies of tim13, named soluble 70 kDa complex. Associates with the TIM22 complex, whose core is composed of tim22 and tim54. Interacts with the transmembrane regions of multi-pass transmembrane proteins in transit.</text>
</comment>
<comment type="subcellular location">
    <subcellularLocation>
        <location evidence="2">Mitochondrion inner membrane</location>
        <topology evidence="2">Peripheral membrane protein</topology>
        <orientation evidence="2">Intermembrane side</orientation>
    </subcellularLocation>
</comment>
<comment type="domain">
    <text evidence="1">The twin CX3C motif contains 4 conserved Cys residues that form 2 disulfide bonds in the mitochondrial intermembrane space. However, during the transit of tim13 from cytoplasm into mitochondrion, the Cys residues probably coordinate zinc, thereby preventing folding and allowing its transfer across mitochondrial outer membrane (By similarity).</text>
</comment>
<comment type="similarity">
    <text evidence="3">Belongs to the small Tim family.</text>
</comment>